<dbReference type="EC" id="3.4.22.-"/>
<dbReference type="EMBL" id="AB004535">
    <property type="protein sequence ID" value="BAA21400.1"/>
    <property type="molecule type" value="Genomic_DNA"/>
</dbReference>
<dbReference type="EMBL" id="CU329671">
    <property type="protein sequence ID" value="CAC37492.1"/>
    <property type="molecule type" value="Genomic_DNA"/>
</dbReference>
<dbReference type="EMBL" id="AB028007">
    <property type="protein sequence ID" value="BAA87311.1"/>
    <property type="molecule type" value="Genomic_DNA"/>
</dbReference>
<dbReference type="RefSeq" id="NP_595608.1">
    <property type="nucleotide sequence ID" value="NM_001021503.2"/>
</dbReference>
<dbReference type="SMR" id="O13612"/>
<dbReference type="BioGRID" id="276794">
    <property type="interactions" value="21"/>
</dbReference>
<dbReference type="FunCoup" id="O13612">
    <property type="interactions" value="2"/>
</dbReference>
<dbReference type="STRING" id="284812.O13612"/>
<dbReference type="iPTMnet" id="O13612"/>
<dbReference type="PaxDb" id="4896-SPBC32H8.02c.1"/>
<dbReference type="EnsemblFungi" id="SPBC32H8.02c.1">
    <property type="protein sequence ID" value="SPBC32H8.02c.1:pep"/>
    <property type="gene ID" value="SPBC32H8.02c"/>
</dbReference>
<dbReference type="GeneID" id="2540263"/>
<dbReference type="KEGG" id="spo:2540263"/>
<dbReference type="PomBase" id="SPBC32H8.02c">
    <property type="gene designation" value="nep2"/>
</dbReference>
<dbReference type="VEuPathDB" id="FungiDB:SPBC32H8.02c"/>
<dbReference type="eggNOG" id="KOG3246">
    <property type="taxonomic scope" value="Eukaryota"/>
</dbReference>
<dbReference type="HOGENOM" id="CLU_054995_0_0_1"/>
<dbReference type="InParanoid" id="O13612"/>
<dbReference type="OMA" id="CENTRIL"/>
<dbReference type="PhylomeDB" id="O13612"/>
<dbReference type="PRO" id="PR:O13612"/>
<dbReference type="Proteomes" id="UP000002485">
    <property type="component" value="Chromosome II"/>
</dbReference>
<dbReference type="GO" id="GO:0005737">
    <property type="term" value="C:cytoplasm"/>
    <property type="evidence" value="ECO:0007005"/>
    <property type="project" value="PomBase"/>
</dbReference>
<dbReference type="GO" id="GO:0005634">
    <property type="term" value="C:nucleus"/>
    <property type="evidence" value="ECO:0007005"/>
    <property type="project" value="PomBase"/>
</dbReference>
<dbReference type="GO" id="GO:0008234">
    <property type="term" value="F:cysteine-type peptidase activity"/>
    <property type="evidence" value="ECO:0007669"/>
    <property type="project" value="UniProtKB-KW"/>
</dbReference>
<dbReference type="GO" id="GO:0019784">
    <property type="term" value="F:deNEDDylase activity"/>
    <property type="evidence" value="ECO:0000314"/>
    <property type="project" value="PomBase"/>
</dbReference>
<dbReference type="GO" id="GO:0051321">
    <property type="term" value="P:meiotic cell cycle"/>
    <property type="evidence" value="ECO:0007669"/>
    <property type="project" value="UniProtKB-KW"/>
</dbReference>
<dbReference type="GO" id="GO:0000338">
    <property type="term" value="P:protein deneddylation"/>
    <property type="evidence" value="ECO:0000314"/>
    <property type="project" value="PomBase"/>
</dbReference>
<dbReference type="GO" id="GO:0006508">
    <property type="term" value="P:proteolysis"/>
    <property type="evidence" value="ECO:0007669"/>
    <property type="project" value="UniProtKB-KW"/>
</dbReference>
<dbReference type="FunFam" id="3.40.395.10:FF:000008">
    <property type="entry name" value="Ulp1 protease family protein"/>
    <property type="match status" value="1"/>
</dbReference>
<dbReference type="Gene3D" id="3.40.395.10">
    <property type="entry name" value="Adenoviral Proteinase, Chain A"/>
    <property type="match status" value="1"/>
</dbReference>
<dbReference type="InterPro" id="IPR044613">
    <property type="entry name" value="Nep1/2-like"/>
</dbReference>
<dbReference type="InterPro" id="IPR038765">
    <property type="entry name" value="Papain-like_cys_pep_sf"/>
</dbReference>
<dbReference type="InterPro" id="IPR003653">
    <property type="entry name" value="Peptidase_C48_C"/>
</dbReference>
<dbReference type="PANTHER" id="PTHR46468:SF7">
    <property type="entry name" value="NEDD8-SPECIFIC PROTEASE 2"/>
    <property type="match status" value="1"/>
</dbReference>
<dbReference type="PANTHER" id="PTHR46468">
    <property type="entry name" value="SENTRIN-SPECIFIC PROTEASE 8"/>
    <property type="match status" value="1"/>
</dbReference>
<dbReference type="Pfam" id="PF02902">
    <property type="entry name" value="Peptidase_C48"/>
    <property type="match status" value="1"/>
</dbReference>
<dbReference type="SUPFAM" id="SSF54001">
    <property type="entry name" value="Cysteine proteinases"/>
    <property type="match status" value="1"/>
</dbReference>
<dbReference type="PROSITE" id="PS50600">
    <property type="entry name" value="ULP_PROTEASE"/>
    <property type="match status" value="1"/>
</dbReference>
<name>NEP2_SCHPO</name>
<reference key="1">
    <citation type="journal article" date="2005" name="Biochem. J.">
        <title>Nep1, a Schizosaccharomyces pombe deneddylating enzyme.</title>
        <authorList>
            <person name="Zhou L."/>
            <person name="Watts F.Z."/>
        </authorList>
    </citation>
    <scope>NUCLEOTIDE SEQUENCE [MRNA]</scope>
</reference>
<reference key="2">
    <citation type="journal article" date="2000" name="Yeast">
        <title>A 38 kb segment containing the cdc2 gene from the left arm of fission yeast chromosome II: sequence analysis and characterization of the genomic DNA and cDNAs encoded on the segment.</title>
        <authorList>
            <person name="Machida M."/>
            <person name="Yamazaki S."/>
            <person name="Kunihiro S."/>
            <person name="Tanaka T."/>
            <person name="Kushida N."/>
            <person name="Jinno K."/>
            <person name="Haikawa Y."/>
            <person name="Yamazaki J."/>
            <person name="Yamamoto S."/>
            <person name="Sekine M."/>
            <person name="Oguchi A."/>
            <person name="Nagai Y."/>
            <person name="Sakai M."/>
            <person name="Aoki K."/>
            <person name="Ogura K."/>
            <person name="Kudoh Y."/>
            <person name="Kikuchi H."/>
            <person name="Zhang M.Q."/>
            <person name="Yanagida M."/>
        </authorList>
    </citation>
    <scope>NUCLEOTIDE SEQUENCE [LARGE SCALE GENOMIC DNA]</scope>
    <source>
        <strain>972 / ATCC 24843</strain>
    </source>
</reference>
<reference key="3">
    <citation type="journal article" date="2002" name="Nature">
        <title>The genome sequence of Schizosaccharomyces pombe.</title>
        <authorList>
            <person name="Wood V."/>
            <person name="Gwilliam R."/>
            <person name="Rajandream M.A."/>
            <person name="Lyne M.H."/>
            <person name="Lyne R."/>
            <person name="Stewart A."/>
            <person name="Sgouros J.G."/>
            <person name="Peat N."/>
            <person name="Hayles J."/>
            <person name="Baker S.G."/>
            <person name="Basham D."/>
            <person name="Bowman S."/>
            <person name="Brooks K."/>
            <person name="Brown D."/>
            <person name="Brown S."/>
            <person name="Chillingworth T."/>
            <person name="Churcher C.M."/>
            <person name="Collins M."/>
            <person name="Connor R."/>
            <person name="Cronin A."/>
            <person name="Davis P."/>
            <person name="Feltwell T."/>
            <person name="Fraser A."/>
            <person name="Gentles S."/>
            <person name="Goble A."/>
            <person name="Hamlin N."/>
            <person name="Harris D.E."/>
            <person name="Hidalgo J."/>
            <person name="Hodgson G."/>
            <person name="Holroyd S."/>
            <person name="Hornsby T."/>
            <person name="Howarth S."/>
            <person name="Huckle E.J."/>
            <person name="Hunt S."/>
            <person name="Jagels K."/>
            <person name="James K.D."/>
            <person name="Jones L."/>
            <person name="Jones M."/>
            <person name="Leather S."/>
            <person name="McDonald S."/>
            <person name="McLean J."/>
            <person name="Mooney P."/>
            <person name="Moule S."/>
            <person name="Mungall K.L."/>
            <person name="Murphy L.D."/>
            <person name="Niblett D."/>
            <person name="Odell C."/>
            <person name="Oliver K."/>
            <person name="O'Neil S."/>
            <person name="Pearson D."/>
            <person name="Quail M.A."/>
            <person name="Rabbinowitsch E."/>
            <person name="Rutherford K.M."/>
            <person name="Rutter S."/>
            <person name="Saunders D."/>
            <person name="Seeger K."/>
            <person name="Sharp S."/>
            <person name="Skelton J."/>
            <person name="Simmonds M.N."/>
            <person name="Squares R."/>
            <person name="Squares S."/>
            <person name="Stevens K."/>
            <person name="Taylor K."/>
            <person name="Taylor R.G."/>
            <person name="Tivey A."/>
            <person name="Walsh S.V."/>
            <person name="Warren T."/>
            <person name="Whitehead S."/>
            <person name="Woodward J.R."/>
            <person name="Volckaert G."/>
            <person name="Aert R."/>
            <person name="Robben J."/>
            <person name="Grymonprez B."/>
            <person name="Weltjens I."/>
            <person name="Vanstreels E."/>
            <person name="Rieger M."/>
            <person name="Schaefer M."/>
            <person name="Mueller-Auer S."/>
            <person name="Gabel C."/>
            <person name="Fuchs M."/>
            <person name="Duesterhoeft A."/>
            <person name="Fritzc C."/>
            <person name="Holzer E."/>
            <person name="Moestl D."/>
            <person name="Hilbert H."/>
            <person name="Borzym K."/>
            <person name="Langer I."/>
            <person name="Beck A."/>
            <person name="Lehrach H."/>
            <person name="Reinhardt R."/>
            <person name="Pohl T.M."/>
            <person name="Eger P."/>
            <person name="Zimmermann W."/>
            <person name="Wedler H."/>
            <person name="Wambutt R."/>
            <person name="Purnelle B."/>
            <person name="Goffeau A."/>
            <person name="Cadieu E."/>
            <person name="Dreano S."/>
            <person name="Gloux S."/>
            <person name="Lelaure V."/>
            <person name="Mottier S."/>
            <person name="Galibert F."/>
            <person name="Aves S.J."/>
            <person name="Xiang Z."/>
            <person name="Hunt C."/>
            <person name="Moore K."/>
            <person name="Hurst S.M."/>
            <person name="Lucas M."/>
            <person name="Rochet M."/>
            <person name="Gaillardin C."/>
            <person name="Tallada V.A."/>
            <person name="Garzon A."/>
            <person name="Thode G."/>
            <person name="Daga R.R."/>
            <person name="Cruzado L."/>
            <person name="Jimenez J."/>
            <person name="Sanchez M."/>
            <person name="del Rey F."/>
            <person name="Benito J."/>
            <person name="Dominguez A."/>
            <person name="Revuelta J.L."/>
            <person name="Moreno S."/>
            <person name="Armstrong J."/>
            <person name="Forsburg S.L."/>
            <person name="Cerutti L."/>
            <person name="Lowe T."/>
            <person name="McCombie W.R."/>
            <person name="Paulsen I."/>
            <person name="Potashkin J."/>
            <person name="Shpakovski G.V."/>
            <person name="Ussery D."/>
            <person name="Barrell B.G."/>
            <person name="Nurse P."/>
        </authorList>
    </citation>
    <scope>NUCLEOTIDE SEQUENCE [LARGE SCALE GENOMIC DNA]</scope>
    <source>
        <strain>972 / ATCC 24843</strain>
    </source>
</reference>
<reference key="4">
    <citation type="journal article" date="2000" name="Genes Cells">
        <title>Large-scale screening of intracellular protein localization in living fission yeast cells by the use of a GFP-fusion genomic DNA library.</title>
        <authorList>
            <person name="Ding D.-Q."/>
            <person name="Tomita Y."/>
            <person name="Yamamoto A."/>
            <person name="Chikashige Y."/>
            <person name="Haraguchi T."/>
            <person name="Hiraoka Y."/>
        </authorList>
    </citation>
    <scope>NUCLEOTIDE SEQUENCE [LARGE SCALE GENOMIC DNA] OF 111-295</scope>
    <scope>SUBCELLULAR LOCATION</scope>
    <source>
        <strain>ATCC 38364 / 968</strain>
    </source>
</reference>
<reference key="5">
    <citation type="journal article" date="2005" name="Curr. Biol.">
        <title>A large-scale screen in S. pombe identifies seven novel genes required for critical meiotic events.</title>
        <authorList>
            <person name="Martin-Castellanos C."/>
            <person name="Blanco M."/>
            <person name="Rozalen A.E."/>
            <person name="Perez-Hidalgo L."/>
            <person name="Garcia A.I."/>
            <person name="Conde F."/>
            <person name="Mata J."/>
            <person name="Ellermeier C."/>
            <person name="Davis L."/>
            <person name="San-Segundo P."/>
            <person name="Smith G.R."/>
            <person name="Moreno S."/>
        </authorList>
    </citation>
    <scope>FUNCTION IN MEIOSIS</scope>
</reference>
<reference key="6">
    <citation type="journal article" date="2006" name="Nat. Biotechnol.">
        <title>ORFeome cloning and global analysis of protein localization in the fission yeast Schizosaccharomyces pombe.</title>
        <authorList>
            <person name="Matsuyama A."/>
            <person name="Arai R."/>
            <person name="Yashiroda Y."/>
            <person name="Shirai A."/>
            <person name="Kamata A."/>
            <person name="Sekido S."/>
            <person name="Kobayashi Y."/>
            <person name="Hashimoto A."/>
            <person name="Hamamoto M."/>
            <person name="Hiraoka Y."/>
            <person name="Horinouchi S."/>
            <person name="Yoshida M."/>
        </authorList>
    </citation>
    <scope>SUBCELLULAR LOCATION [LARGE SCALE ANALYSIS]</scope>
</reference>
<reference key="7">
    <citation type="journal article" date="2008" name="J. Proteome Res.">
        <title>Phosphoproteome analysis of fission yeast.</title>
        <authorList>
            <person name="Wilson-Grady J.T."/>
            <person name="Villen J."/>
            <person name="Gygi S.P."/>
        </authorList>
    </citation>
    <scope>PHOSPHORYLATION [LARGE SCALE ANALYSIS] AT SER-35 AND SER-367</scope>
    <scope>IDENTIFICATION BY MASS SPECTROMETRY</scope>
</reference>
<organism>
    <name type="scientific">Schizosaccharomyces pombe (strain 972 / ATCC 24843)</name>
    <name type="common">Fission yeast</name>
    <dbReference type="NCBI Taxonomy" id="284812"/>
    <lineage>
        <taxon>Eukaryota</taxon>
        <taxon>Fungi</taxon>
        <taxon>Dikarya</taxon>
        <taxon>Ascomycota</taxon>
        <taxon>Taphrinomycotina</taxon>
        <taxon>Schizosaccharomycetes</taxon>
        <taxon>Schizosaccharomycetales</taxon>
        <taxon>Schizosaccharomycetaceae</taxon>
        <taxon>Schizosaccharomyces</taxon>
    </lineage>
</organism>
<evidence type="ECO:0000250" key="1"/>
<evidence type="ECO:0000256" key="2">
    <source>
        <dbReference type="SAM" id="MobiDB-lite"/>
    </source>
</evidence>
<evidence type="ECO:0000269" key="3">
    <source>
    </source>
</evidence>
<evidence type="ECO:0000269" key="4">
    <source>
    </source>
</evidence>
<evidence type="ECO:0000269" key="5">
    <source>
    </source>
</evidence>
<evidence type="ECO:0000269" key="6">
    <source>
    </source>
</evidence>
<evidence type="ECO:0000305" key="7"/>
<sequence length="415" mass="46433">MRSNSIFTKEIDSEAVKKSSNLRPPSTGSSNSNGSDTASPKKKKKGFFRSLFGSSSSGSKSCGSPFTRIWLEYFEVSLRKNDVDHFRPGYWILDTNIDFFYEIMLRQVLLKRPKEESQQIYLLRPAMVFFLAQAPNPLEIESALPPAMFDASFIFLPINDTNECGIESGSHWSLLVVSVEKGLGWYYDSMSNGNTNDCNLAIKNLGILLKKEFRVRHMKTPQQINDCDCGLHVCENTRILMYRLLQKPYVPKVDMNLDHSVVDSVRLRKALMEVITSLLAAYGSKVPKPSETHTDPEKDKKIFSKICKTEELLELPTLSAVTSDSAQPHSLPASMPSSQPQSRSESLPLTHPNSEPNPKLDSQPNSSPVRRPSLIKVKTASTSVLPTSILQRPPSIVPRPETAAIQHTQQSIEIH</sequence>
<accession>O13612</accession>
<accession>Q9UTT9</accession>
<proteinExistence type="evidence at protein level"/>
<gene>
    <name type="primary">nep2</name>
    <name type="synonym">mug120</name>
    <name type="ORF">pi021</name>
    <name type="ORF">SPBC32H8.02c</name>
</gene>
<feature type="chain" id="PRO_0000101736" description="NEDD8-specific protease 2">
    <location>
        <begin position="1"/>
        <end position="415"/>
    </location>
</feature>
<feature type="region of interest" description="Disordered" evidence="2">
    <location>
        <begin position="1"/>
        <end position="42"/>
    </location>
</feature>
<feature type="region of interest" description="Disordered" evidence="2">
    <location>
        <begin position="320"/>
        <end position="415"/>
    </location>
</feature>
<feature type="compositionally biased region" description="Low complexity" evidence="2">
    <location>
        <begin position="26"/>
        <end position="38"/>
    </location>
</feature>
<feature type="compositionally biased region" description="Polar residues" evidence="2">
    <location>
        <begin position="335"/>
        <end position="368"/>
    </location>
</feature>
<feature type="compositionally biased region" description="Polar residues" evidence="2">
    <location>
        <begin position="379"/>
        <end position="390"/>
    </location>
</feature>
<feature type="compositionally biased region" description="Polar residues" evidence="2">
    <location>
        <begin position="405"/>
        <end position="415"/>
    </location>
</feature>
<feature type="active site" evidence="1">
    <location>
        <position position="171"/>
    </location>
</feature>
<feature type="active site" evidence="1">
    <location>
        <position position="188"/>
    </location>
</feature>
<feature type="active site" evidence="1">
    <location>
        <position position="229"/>
    </location>
</feature>
<feature type="modified residue" description="Phosphoserine" evidence="6">
    <location>
        <position position="35"/>
    </location>
</feature>
<feature type="modified residue" description="Phosphoserine" evidence="6">
    <location>
        <position position="367"/>
    </location>
</feature>
<comment type="function">
    <text evidence="1 4">Protease that catalyzes two essential functions in the NEDD8 pathway: processing of full-length NEDD8 to its mature form and deconjugation of NEDD8 from targeted proteins such as the pcu1, pcu2 and pcu4 cullins and other proteins (By similarity). Has a role in meiosis.</text>
</comment>
<comment type="subcellular location">
    <subcellularLocation>
        <location evidence="3">Cytoplasm</location>
    </subcellularLocation>
    <subcellularLocation>
        <location evidence="5">Nucleus</location>
    </subcellularLocation>
</comment>
<comment type="similarity">
    <text evidence="7">Belongs to the peptidase C48 family.</text>
</comment>
<protein>
    <recommendedName>
        <fullName>NEDD8-specific protease 2</fullName>
        <ecNumber>3.4.22.-</ecNumber>
    </recommendedName>
    <alternativeName>
        <fullName>Meiotically up-regulated gene 120 protein</fullName>
    </alternativeName>
</protein>
<keyword id="KW-0963">Cytoplasm</keyword>
<keyword id="KW-0378">Hydrolase</keyword>
<keyword id="KW-0469">Meiosis</keyword>
<keyword id="KW-0539">Nucleus</keyword>
<keyword id="KW-0597">Phosphoprotein</keyword>
<keyword id="KW-0645">Protease</keyword>
<keyword id="KW-1185">Reference proteome</keyword>
<keyword id="KW-0788">Thiol protease</keyword>